<feature type="chain" id="PRO_0000173696" description="Arginase-1">
    <location>
        <begin position="1"/>
        <end position="322"/>
    </location>
</feature>
<feature type="region of interest" description="Disordered" evidence="7">
    <location>
        <begin position="1"/>
        <end position="26"/>
    </location>
</feature>
<feature type="compositionally biased region" description="Low complexity" evidence="7">
    <location>
        <begin position="1"/>
        <end position="12"/>
    </location>
</feature>
<feature type="binding site" evidence="6">
    <location>
        <position position="101"/>
    </location>
    <ligand>
        <name>Mn(2+)</name>
        <dbReference type="ChEBI" id="CHEBI:29035"/>
        <label>1</label>
    </ligand>
</feature>
<feature type="binding site" evidence="6">
    <location>
        <position position="124"/>
    </location>
    <ligand>
        <name>Mn(2+)</name>
        <dbReference type="ChEBI" id="CHEBI:29035"/>
        <label>1</label>
    </ligand>
</feature>
<feature type="binding site" evidence="6">
    <location>
        <position position="124"/>
    </location>
    <ligand>
        <name>Mn(2+)</name>
        <dbReference type="ChEBI" id="CHEBI:29035"/>
        <label>2</label>
    </ligand>
</feature>
<feature type="binding site" evidence="2">
    <location>
        <begin position="126"/>
        <end position="130"/>
    </location>
    <ligand>
        <name>substrate</name>
    </ligand>
</feature>
<feature type="binding site" evidence="6">
    <location>
        <position position="126"/>
    </location>
    <ligand>
        <name>Mn(2+)</name>
        <dbReference type="ChEBI" id="CHEBI:29035"/>
        <label>2</label>
    </ligand>
</feature>
<feature type="binding site" evidence="6">
    <location>
        <position position="128"/>
    </location>
    <ligand>
        <name>Mn(2+)</name>
        <dbReference type="ChEBI" id="CHEBI:29035"/>
        <label>1</label>
    </ligand>
</feature>
<feature type="binding site" evidence="2">
    <location>
        <begin position="137"/>
        <end position="139"/>
    </location>
    <ligand>
        <name>substrate</name>
    </ligand>
</feature>
<feature type="binding site" evidence="2">
    <location>
        <position position="183"/>
    </location>
    <ligand>
        <name>substrate</name>
    </ligand>
</feature>
<feature type="binding site" evidence="6">
    <location>
        <position position="232"/>
    </location>
    <ligand>
        <name>Mn(2+)</name>
        <dbReference type="ChEBI" id="CHEBI:29035"/>
        <label>1</label>
    </ligand>
</feature>
<feature type="binding site" evidence="6">
    <location>
        <position position="232"/>
    </location>
    <ligand>
        <name>Mn(2+)</name>
        <dbReference type="ChEBI" id="CHEBI:29035"/>
        <label>2</label>
    </ligand>
</feature>
<feature type="binding site" evidence="6">
    <location>
        <position position="234"/>
    </location>
    <ligand>
        <name>Mn(2+)</name>
        <dbReference type="ChEBI" id="CHEBI:29035"/>
        <label>2</label>
    </ligand>
</feature>
<feature type="binding site" evidence="3">
    <location>
        <position position="246"/>
    </location>
    <ligand>
        <name>substrate</name>
    </ligand>
</feature>
<feature type="binding site" evidence="4">
    <location>
        <position position="277"/>
    </location>
    <ligand>
        <name>substrate</name>
    </ligand>
</feature>
<feature type="modified residue" description="Phosphoserine" evidence="5">
    <location>
        <position position="7"/>
    </location>
</feature>
<feature type="modified residue" description="N6-succinyllysine" evidence="5">
    <location>
        <position position="17"/>
    </location>
</feature>
<feature type="modified residue" description="Phosphoserine" evidence="2">
    <location>
        <position position="62"/>
    </location>
</feature>
<feature type="modified residue" description="Phosphoserine" evidence="2">
    <location>
        <position position="163"/>
    </location>
</feature>
<evidence type="ECO:0000250" key="1"/>
<evidence type="ECO:0000250" key="2">
    <source>
        <dbReference type="UniProtKB" id="P05089"/>
    </source>
</evidence>
<evidence type="ECO:0000250" key="3">
    <source>
        <dbReference type="UniProtKB" id="P53608"/>
    </source>
</evidence>
<evidence type="ECO:0000250" key="4">
    <source>
        <dbReference type="UniProtKB" id="P78540"/>
    </source>
</evidence>
<evidence type="ECO:0000250" key="5">
    <source>
        <dbReference type="UniProtKB" id="Q61176"/>
    </source>
</evidence>
<evidence type="ECO:0000255" key="6">
    <source>
        <dbReference type="PROSITE-ProRule" id="PRU00742"/>
    </source>
</evidence>
<evidence type="ECO:0000256" key="7">
    <source>
        <dbReference type="SAM" id="MobiDB-lite"/>
    </source>
</evidence>
<gene>
    <name type="primary">ARG1</name>
</gene>
<reference key="1">
    <citation type="submission" date="2005-01" db="EMBL/GenBank/DDBJ databases">
        <title>Oryctolagus cuniculus arginase 1, liver (Arg1) mRNA.</title>
        <authorList>
            <person name="Teupser D."/>
            <person name="Burkhardt R."/>
            <person name="Wilfert W."/>
            <person name="Thiery J."/>
        </authorList>
    </citation>
    <scope>NUCLEOTIDE SEQUENCE [MRNA]</scope>
    <source>
        <tissue>Liver</tissue>
    </source>
</reference>
<proteinExistence type="evidence at transcript level"/>
<organism>
    <name type="scientific">Oryctolagus cuniculus</name>
    <name type="common">Rabbit</name>
    <dbReference type="NCBI Taxonomy" id="9986"/>
    <lineage>
        <taxon>Eukaryota</taxon>
        <taxon>Metazoa</taxon>
        <taxon>Chordata</taxon>
        <taxon>Craniata</taxon>
        <taxon>Vertebrata</taxon>
        <taxon>Euteleostomi</taxon>
        <taxon>Mammalia</taxon>
        <taxon>Eutheria</taxon>
        <taxon>Euarchontoglires</taxon>
        <taxon>Glires</taxon>
        <taxon>Lagomorpha</taxon>
        <taxon>Leporidae</taxon>
        <taxon>Oryctolagus</taxon>
    </lineage>
</organism>
<sequence>MSSKSKSIGIIGAPFSKGQPRGGVEEGPTVLRKAGLLEKLKEQEHDVTDYGDLSFADVPNDSPFHIVKNPRAVGRANEQLAGAVAEIKKNGRISLVLGGDHSLAIGSISGHASVCPDLAVIWVDAHTDINTPLTTTSGNLHGQPVSFLLKELKGKIPDVPGFSWVTPCISAKDIVYIGLRDVDPGEHYIVKTLGIKYFSMTEVDKLGIGKVMEETLCYLLGRKKRPIHLSFDVDGLDPSFTPATGTPVAGGLSYREGIYITEAIHKTGLLSGLDIMEVNPSLGKTPEEVTRTVNTAVALTLASFGVAREGNHKPIDYLHPPK</sequence>
<dbReference type="EC" id="3.5.3.1" evidence="2"/>
<dbReference type="EMBL" id="AF365403">
    <property type="protein sequence ID" value="AAK52824.2"/>
    <property type="molecule type" value="mRNA"/>
</dbReference>
<dbReference type="RefSeq" id="NP_001075577.1">
    <property type="nucleotide sequence ID" value="NM_001082108.1"/>
</dbReference>
<dbReference type="SMR" id="Q95KM0"/>
<dbReference type="FunCoup" id="Q95KM0">
    <property type="interactions" value="22"/>
</dbReference>
<dbReference type="STRING" id="9986.ENSOCUP00000026710"/>
<dbReference type="PaxDb" id="9986-ENSOCUP00000001559"/>
<dbReference type="GeneID" id="100008814"/>
<dbReference type="KEGG" id="ocu:100008814"/>
<dbReference type="CTD" id="383"/>
<dbReference type="eggNOG" id="KOG2965">
    <property type="taxonomic scope" value="Eukaryota"/>
</dbReference>
<dbReference type="InParanoid" id="Q95KM0"/>
<dbReference type="OrthoDB" id="9992747at2759"/>
<dbReference type="UniPathway" id="UPA00158">
    <property type="reaction ID" value="UER00270"/>
</dbReference>
<dbReference type="Proteomes" id="UP000001811">
    <property type="component" value="Unplaced"/>
</dbReference>
<dbReference type="GO" id="GO:0005829">
    <property type="term" value="C:cytosol"/>
    <property type="evidence" value="ECO:0007669"/>
    <property type="project" value="TreeGrafter"/>
</dbReference>
<dbReference type="GO" id="GO:0005634">
    <property type="term" value="C:nucleus"/>
    <property type="evidence" value="ECO:0007669"/>
    <property type="project" value="TreeGrafter"/>
</dbReference>
<dbReference type="GO" id="GO:0004053">
    <property type="term" value="F:arginase activity"/>
    <property type="evidence" value="ECO:0007669"/>
    <property type="project" value="UniProtKB-EC"/>
</dbReference>
<dbReference type="GO" id="GO:0030145">
    <property type="term" value="F:manganese ion binding"/>
    <property type="evidence" value="ECO:0007669"/>
    <property type="project" value="TreeGrafter"/>
</dbReference>
<dbReference type="GO" id="GO:0019547">
    <property type="term" value="P:arginine catabolic process to ornithine"/>
    <property type="evidence" value="ECO:0007669"/>
    <property type="project" value="TreeGrafter"/>
</dbReference>
<dbReference type="GO" id="GO:0000050">
    <property type="term" value="P:urea cycle"/>
    <property type="evidence" value="ECO:0007669"/>
    <property type="project" value="UniProtKB-UniPathway"/>
</dbReference>
<dbReference type="CDD" id="cd11587">
    <property type="entry name" value="Arginase-like"/>
    <property type="match status" value="1"/>
</dbReference>
<dbReference type="FunFam" id="3.40.800.10:FF:000011">
    <property type="entry name" value="Arginase-1"/>
    <property type="match status" value="1"/>
</dbReference>
<dbReference type="Gene3D" id="3.40.800.10">
    <property type="entry name" value="Ureohydrolase domain"/>
    <property type="match status" value="1"/>
</dbReference>
<dbReference type="InterPro" id="IPR014033">
    <property type="entry name" value="Arginase"/>
</dbReference>
<dbReference type="InterPro" id="IPR006035">
    <property type="entry name" value="Ureohydrolase"/>
</dbReference>
<dbReference type="InterPro" id="IPR023696">
    <property type="entry name" value="Ureohydrolase_dom_sf"/>
</dbReference>
<dbReference type="InterPro" id="IPR020855">
    <property type="entry name" value="Ureohydrolase_Mn_BS"/>
</dbReference>
<dbReference type="NCBIfam" id="TIGR01229">
    <property type="entry name" value="rocF_arginase"/>
    <property type="match status" value="1"/>
</dbReference>
<dbReference type="PANTHER" id="PTHR43782">
    <property type="entry name" value="ARGINASE"/>
    <property type="match status" value="1"/>
</dbReference>
<dbReference type="PANTHER" id="PTHR43782:SF2">
    <property type="entry name" value="ARGINASE-1"/>
    <property type="match status" value="1"/>
</dbReference>
<dbReference type="Pfam" id="PF00491">
    <property type="entry name" value="Arginase"/>
    <property type="match status" value="1"/>
</dbReference>
<dbReference type="PIRSF" id="PIRSF036979">
    <property type="entry name" value="Arginase"/>
    <property type="match status" value="1"/>
</dbReference>
<dbReference type="PRINTS" id="PR00116">
    <property type="entry name" value="ARGINASE"/>
</dbReference>
<dbReference type="SUPFAM" id="SSF52768">
    <property type="entry name" value="Arginase/deacetylase"/>
    <property type="match status" value="1"/>
</dbReference>
<dbReference type="PROSITE" id="PS01053">
    <property type="entry name" value="ARGINASE_1"/>
    <property type="match status" value="1"/>
</dbReference>
<dbReference type="PROSITE" id="PS51409">
    <property type="entry name" value="ARGINASE_2"/>
    <property type="match status" value="1"/>
</dbReference>
<protein>
    <recommendedName>
        <fullName>Arginase-1</fullName>
        <ecNumber evidence="2">3.5.3.1</ecNumber>
    </recommendedName>
    <alternativeName>
        <fullName>Liver-type arginase</fullName>
    </alternativeName>
    <alternativeName>
        <fullName>Type I arginase</fullName>
    </alternativeName>
</protein>
<keyword id="KW-0056">Arginine metabolism</keyword>
<keyword id="KW-0963">Cytoplasm</keyword>
<keyword id="KW-0378">Hydrolase</keyword>
<keyword id="KW-0464">Manganese</keyword>
<keyword id="KW-0479">Metal-binding</keyword>
<keyword id="KW-0597">Phosphoprotein</keyword>
<keyword id="KW-1185">Reference proteome</keyword>
<keyword id="KW-0835">Urea cycle</keyword>
<comment type="catalytic activity">
    <reaction evidence="2">
        <text>L-arginine + H2O = urea + L-ornithine</text>
        <dbReference type="Rhea" id="RHEA:20569"/>
        <dbReference type="ChEBI" id="CHEBI:15377"/>
        <dbReference type="ChEBI" id="CHEBI:16199"/>
        <dbReference type="ChEBI" id="CHEBI:32682"/>
        <dbReference type="ChEBI" id="CHEBI:46911"/>
        <dbReference type="EC" id="3.5.3.1"/>
    </reaction>
</comment>
<comment type="cofactor">
    <cofactor evidence="6">
        <name>Mn(2+)</name>
        <dbReference type="ChEBI" id="CHEBI:29035"/>
    </cofactor>
    <text evidence="6">Binds 2 manganese ions per subunit.</text>
</comment>
<comment type="pathway">
    <text evidence="2">Nitrogen metabolism; urea cycle; L-ornithine and urea from L-arginine: step 1/1.</text>
</comment>
<comment type="subunit">
    <text evidence="1 2">Homotrimer (By similarity). Interacts with CMTM6 (By similarity).</text>
</comment>
<comment type="subcellular location">
    <subcellularLocation>
        <location>Cytoplasm</location>
    </subcellularLocation>
</comment>
<comment type="similarity">
    <text evidence="6">Belongs to the arginase family.</text>
</comment>
<accession>Q95KM0</accession>
<name>ARGI1_RABIT</name>